<keyword id="KW-0687">Ribonucleoprotein</keyword>
<keyword id="KW-0689">Ribosomal protein</keyword>
<keyword id="KW-0694">RNA-binding</keyword>
<keyword id="KW-0699">rRNA-binding</keyword>
<evidence type="ECO:0000255" key="1">
    <source>
        <dbReference type="HAMAP-Rule" id="MF_00360"/>
    </source>
</evidence>
<evidence type="ECO:0000305" key="2"/>
<protein>
    <recommendedName>
        <fullName evidence="1">Small ribosomal subunit protein bS6</fullName>
    </recommendedName>
    <alternativeName>
        <fullName evidence="2">30S ribosomal protein S6</fullName>
    </alternativeName>
</protein>
<feature type="chain" id="PRO_0000176851" description="Small ribosomal subunit protein bS6">
    <location>
        <begin position="1"/>
        <end position="96"/>
    </location>
</feature>
<gene>
    <name evidence="1" type="primary">rpsF</name>
    <name type="ordered locus">SpyM3_1582</name>
</gene>
<reference key="1">
    <citation type="journal article" date="2002" name="Proc. Natl. Acad. Sci. U.S.A.">
        <title>Genome sequence of a serotype M3 strain of group A Streptococcus: phage-encoded toxins, the high-virulence phenotype, and clone emergence.</title>
        <authorList>
            <person name="Beres S.B."/>
            <person name="Sylva G.L."/>
            <person name="Barbian K.D."/>
            <person name="Lei B."/>
            <person name="Hoff J.S."/>
            <person name="Mammarella N.D."/>
            <person name="Liu M.-Y."/>
            <person name="Smoot J.C."/>
            <person name="Porcella S.F."/>
            <person name="Parkins L.D."/>
            <person name="Campbell D.S."/>
            <person name="Smith T.M."/>
            <person name="McCormick J.K."/>
            <person name="Leung D.Y.M."/>
            <person name="Schlievert P.M."/>
            <person name="Musser J.M."/>
        </authorList>
    </citation>
    <scope>NUCLEOTIDE SEQUENCE [LARGE SCALE GENOMIC DNA]</scope>
    <source>
        <strain>ATCC BAA-595 / MGAS315</strain>
    </source>
</reference>
<sequence length="96" mass="11082">MAKYEILYIIRPNIEEEAKNALVARFDSILTDNGATVVESKDWEKRRLAYEINDFREGLYHIVNLEATDAAALNEFDRLSKINGDILRHMIVKLDA</sequence>
<accession>P0DE96</accession>
<accession>P66600</accession>
<accession>Q99Y79</accession>
<name>RS6_STRP3</name>
<organism>
    <name type="scientific">Streptococcus pyogenes serotype M3 (strain ATCC BAA-595 / MGAS315)</name>
    <dbReference type="NCBI Taxonomy" id="198466"/>
    <lineage>
        <taxon>Bacteria</taxon>
        <taxon>Bacillati</taxon>
        <taxon>Bacillota</taxon>
        <taxon>Bacilli</taxon>
        <taxon>Lactobacillales</taxon>
        <taxon>Streptococcaceae</taxon>
        <taxon>Streptococcus</taxon>
    </lineage>
</organism>
<proteinExistence type="inferred from homology"/>
<dbReference type="EMBL" id="AE014074">
    <property type="protein sequence ID" value="AAM80189.1"/>
    <property type="molecule type" value="Genomic_DNA"/>
</dbReference>
<dbReference type="RefSeq" id="WP_002983117.1">
    <property type="nucleotide sequence ID" value="NC_004070.1"/>
</dbReference>
<dbReference type="SMR" id="P0DE96"/>
<dbReference type="GeneID" id="83689976"/>
<dbReference type="KEGG" id="spg:SpyM3_1582"/>
<dbReference type="HOGENOM" id="CLU_113441_5_3_9"/>
<dbReference type="Proteomes" id="UP000000564">
    <property type="component" value="Chromosome"/>
</dbReference>
<dbReference type="GO" id="GO:0005737">
    <property type="term" value="C:cytoplasm"/>
    <property type="evidence" value="ECO:0007669"/>
    <property type="project" value="UniProtKB-ARBA"/>
</dbReference>
<dbReference type="GO" id="GO:1990904">
    <property type="term" value="C:ribonucleoprotein complex"/>
    <property type="evidence" value="ECO:0007669"/>
    <property type="project" value="UniProtKB-KW"/>
</dbReference>
<dbReference type="GO" id="GO:0005840">
    <property type="term" value="C:ribosome"/>
    <property type="evidence" value="ECO:0007669"/>
    <property type="project" value="UniProtKB-KW"/>
</dbReference>
<dbReference type="GO" id="GO:0070181">
    <property type="term" value="F:small ribosomal subunit rRNA binding"/>
    <property type="evidence" value="ECO:0007669"/>
    <property type="project" value="TreeGrafter"/>
</dbReference>
<dbReference type="GO" id="GO:0003735">
    <property type="term" value="F:structural constituent of ribosome"/>
    <property type="evidence" value="ECO:0007669"/>
    <property type="project" value="InterPro"/>
</dbReference>
<dbReference type="GO" id="GO:0006412">
    <property type="term" value="P:translation"/>
    <property type="evidence" value="ECO:0007669"/>
    <property type="project" value="UniProtKB-UniRule"/>
</dbReference>
<dbReference type="CDD" id="cd00473">
    <property type="entry name" value="bS6"/>
    <property type="match status" value="1"/>
</dbReference>
<dbReference type="FunFam" id="3.30.70.60:FF:000002">
    <property type="entry name" value="30S ribosomal protein S6"/>
    <property type="match status" value="1"/>
</dbReference>
<dbReference type="Gene3D" id="3.30.70.60">
    <property type="match status" value="1"/>
</dbReference>
<dbReference type="HAMAP" id="MF_00360">
    <property type="entry name" value="Ribosomal_bS6"/>
    <property type="match status" value="1"/>
</dbReference>
<dbReference type="InterPro" id="IPR000529">
    <property type="entry name" value="Ribosomal_bS6"/>
</dbReference>
<dbReference type="InterPro" id="IPR035980">
    <property type="entry name" value="Ribosomal_bS6_sf"/>
</dbReference>
<dbReference type="InterPro" id="IPR020814">
    <property type="entry name" value="Ribosomal_S6_plastid/chlpt"/>
</dbReference>
<dbReference type="InterPro" id="IPR014717">
    <property type="entry name" value="Transl_elong_EF1B/ribsomal_bS6"/>
</dbReference>
<dbReference type="NCBIfam" id="TIGR00166">
    <property type="entry name" value="S6"/>
    <property type="match status" value="1"/>
</dbReference>
<dbReference type="PANTHER" id="PTHR21011">
    <property type="entry name" value="MITOCHONDRIAL 28S RIBOSOMAL PROTEIN S6"/>
    <property type="match status" value="1"/>
</dbReference>
<dbReference type="PANTHER" id="PTHR21011:SF1">
    <property type="entry name" value="SMALL RIBOSOMAL SUBUNIT PROTEIN BS6M"/>
    <property type="match status" value="1"/>
</dbReference>
<dbReference type="Pfam" id="PF01250">
    <property type="entry name" value="Ribosomal_S6"/>
    <property type="match status" value="1"/>
</dbReference>
<dbReference type="SUPFAM" id="SSF54995">
    <property type="entry name" value="Ribosomal protein S6"/>
    <property type="match status" value="1"/>
</dbReference>
<comment type="function">
    <text evidence="1">Binds together with bS18 to 16S ribosomal RNA.</text>
</comment>
<comment type="similarity">
    <text evidence="1">Belongs to the bacterial ribosomal protein bS6 family.</text>
</comment>